<comment type="function">
    <text evidence="1 2">Insulin decreases blood glucose concentration (By similarity). May have evolved to activate insulin receptors (INSR) in vertebrates. Molecular docking studies reveals unique interaction with the human insulin receptor. In vivo, insulin-like peptide injection reduces blood glucose levels in two models of zebrafish diabetes (streptozotocin- and glucose-induced). Also shorter swimming distance of zebrafish larvae, an effect which is not observed with human insulin (By similarity).</text>
</comment>
<comment type="subcellular location">
    <subcellularLocation>
        <location evidence="7">Secreted</location>
    </subcellularLocation>
</comment>
<comment type="similarity">
    <text evidence="6">Belongs to the insulin family.</text>
</comment>
<comment type="online information" name="National Center for Biotechnology Information (NCBI)">
    <link uri="https://www.ncbi.nlm.nih.gov/sra/?term=SRP303227"/>
</comment>
<keyword id="KW-0119">Carbohydrate metabolism</keyword>
<keyword id="KW-1015">Disulfide bond</keyword>
<keyword id="KW-0313">Glucose metabolism</keyword>
<keyword id="KW-0372">Hormone</keyword>
<keyword id="KW-1185">Reference proteome</keyword>
<keyword id="KW-0964">Secreted</keyword>
<keyword id="KW-0732">Signal</keyword>
<sequence>MLFYFGLAVIFLIDSSQTQTLYKVNEVGGSQVDRNLCGSDIPTAIKDICGIKKRQNIPRKYGRDPNNILEKEEFAKRFLRVRRQTTDIVEECCVENCAIEEIAEYC</sequence>
<reference key="1">
    <citation type="journal article" date="2022" name="Front. Mar. Sci.">
        <title>Transcriptome sequencing of the pale anemones (Exaiptasia diaphana) revealed functional peptide gene resources of sea anemone.</title>
        <authorList>
            <person name="Fu J."/>
            <person name="He Y."/>
            <person name="Peng C."/>
            <person name="Tang T."/>
            <person name="Jin A."/>
            <person name="Liao Y."/>
            <person name="Shi Q."/>
            <person name="Gao B."/>
        </authorList>
    </citation>
    <scope>NUCLEOTIDE SEQUENCE [LARGE SCALE MRNA]</scope>
</reference>
<reference key="2">
    <citation type="journal article" date="2024" name="Mar. Drugs">
        <title>Synthesis and hypoglycemic effect of insulin from the venom of sea anemone Exaiptasia diaphana.</title>
        <authorList>
            <person name="Guo Q."/>
            <person name="Tang T."/>
            <person name="Lu J."/>
            <person name="Huang M."/>
            <person name="Zhang J."/>
            <person name="Ma L."/>
            <person name="Gao B."/>
        </authorList>
    </citation>
    <scope>3D-STRUCTURE MODELING</scope>
</reference>
<protein>
    <recommendedName>
        <fullName evidence="4 5">Insulin-like peptide 03</fullName>
        <shortName evidence="4 5">ILP-Ap03</shortName>
    </recommendedName>
    <component>
        <recommendedName>
            <fullName evidence="4 5">ILP-Ap03 B chain</fullName>
        </recommendedName>
    </component>
    <component>
        <recommendedName>
            <fullName evidence="4 5">ILP-Ap03 A chain</fullName>
        </recommendedName>
    </component>
</protein>
<accession>P0DRI1</accession>
<evidence type="ECO:0000250" key="1">
    <source>
        <dbReference type="UniProtKB" id="P01308"/>
    </source>
</evidence>
<evidence type="ECO:0000250" key="2">
    <source>
        <dbReference type="UniProtKB" id="P0DRI2"/>
    </source>
</evidence>
<evidence type="ECO:0000255" key="3"/>
<evidence type="ECO:0000303" key="4">
    <source>
    </source>
</evidence>
<evidence type="ECO:0000303" key="5">
    <source ref="1"/>
</evidence>
<evidence type="ECO:0000305" key="6"/>
<evidence type="ECO:0000305" key="7">
    <source ref="1"/>
</evidence>
<feature type="signal peptide" evidence="3">
    <location>
        <begin position="1"/>
        <end position="18"/>
    </location>
</feature>
<feature type="propeptide" id="PRO_0000461934" evidence="7">
    <location>
        <begin position="19"/>
        <end position="34"/>
    </location>
</feature>
<feature type="chain" id="PRO_0000461935" description="ILP-Ap03 B chain" evidence="7">
    <location>
        <begin position="35"/>
        <end position="51"/>
    </location>
</feature>
<feature type="propeptide" id="PRO_0000461936" description="C peptide" evidence="7">
    <location>
        <begin position="52"/>
        <end position="82"/>
    </location>
</feature>
<feature type="chain" id="PRO_0000461937" description="ILP-Ap03 A chain" evidence="7">
    <location>
        <begin position="83"/>
        <end position="106"/>
    </location>
</feature>
<feature type="disulfide bond" description="Interchain (between B and A chains)" evidence="1">
    <location>
        <begin position="37"/>
        <end position="93"/>
    </location>
</feature>
<feature type="disulfide bond" description="Interchain (between B and A chains)" evidence="1">
    <location>
        <begin position="49"/>
        <end position="106"/>
    </location>
</feature>
<feature type="disulfide bond" evidence="1">
    <location>
        <begin position="92"/>
        <end position="97"/>
    </location>
</feature>
<dbReference type="Proteomes" id="UP000887567">
    <property type="component" value="Unplaced"/>
</dbReference>
<dbReference type="Gene3D" id="1.10.100.10">
    <property type="entry name" value="Insulin-like"/>
    <property type="match status" value="1"/>
</dbReference>
<dbReference type="InterPro" id="IPR016179">
    <property type="entry name" value="Insulin-like"/>
</dbReference>
<dbReference type="InterPro" id="IPR036438">
    <property type="entry name" value="Insulin-like_sf"/>
</dbReference>
<dbReference type="InterPro" id="IPR022352">
    <property type="entry name" value="Insulin_family"/>
</dbReference>
<dbReference type="Pfam" id="PF00049">
    <property type="entry name" value="Insulin"/>
    <property type="match status" value="1"/>
</dbReference>
<dbReference type="PRINTS" id="PR00276">
    <property type="entry name" value="INSULINFAMLY"/>
</dbReference>
<dbReference type="SMART" id="SM00078">
    <property type="entry name" value="IlGF"/>
    <property type="match status" value="1"/>
</dbReference>
<dbReference type="SUPFAM" id="SSF56994">
    <property type="entry name" value="Insulin-like"/>
    <property type="match status" value="1"/>
</dbReference>
<organism>
    <name type="scientific">Exaiptasia diaphana</name>
    <name type="common">Tropical sea anemone</name>
    <name type="synonym">Aiptasia pulchella</name>
    <dbReference type="NCBI Taxonomy" id="2652724"/>
    <lineage>
        <taxon>Eukaryota</taxon>
        <taxon>Metazoa</taxon>
        <taxon>Cnidaria</taxon>
        <taxon>Anthozoa</taxon>
        <taxon>Hexacorallia</taxon>
        <taxon>Actiniaria</taxon>
        <taxon>Aiptasiidae</taxon>
        <taxon>Exaiptasia</taxon>
    </lineage>
</organism>
<proteinExistence type="inferred from homology"/>
<name>INS3_EXADI</name>